<proteinExistence type="inferred from homology"/>
<gene>
    <name evidence="1" type="primary">tilS</name>
    <name type="ordered locus">APJL_1568</name>
</gene>
<organism>
    <name type="scientific">Actinobacillus pleuropneumoniae serotype 3 (strain JL03)</name>
    <dbReference type="NCBI Taxonomy" id="434271"/>
    <lineage>
        <taxon>Bacteria</taxon>
        <taxon>Pseudomonadati</taxon>
        <taxon>Pseudomonadota</taxon>
        <taxon>Gammaproteobacteria</taxon>
        <taxon>Pasteurellales</taxon>
        <taxon>Pasteurellaceae</taxon>
        <taxon>Actinobacillus</taxon>
    </lineage>
</organism>
<evidence type="ECO:0000255" key="1">
    <source>
        <dbReference type="HAMAP-Rule" id="MF_01161"/>
    </source>
</evidence>
<comment type="function">
    <text evidence="1">Ligates lysine onto the cytidine present at position 34 of the AUA codon-specific tRNA(Ile) that contains the anticodon CAU, in an ATP-dependent manner. Cytidine is converted to lysidine, thus changing the amino acid specificity of the tRNA from methionine to isoleucine.</text>
</comment>
<comment type="catalytic activity">
    <reaction evidence="1">
        <text>cytidine(34) in tRNA(Ile2) + L-lysine + ATP = lysidine(34) in tRNA(Ile2) + AMP + diphosphate + H(+)</text>
        <dbReference type="Rhea" id="RHEA:43744"/>
        <dbReference type="Rhea" id="RHEA-COMP:10625"/>
        <dbReference type="Rhea" id="RHEA-COMP:10670"/>
        <dbReference type="ChEBI" id="CHEBI:15378"/>
        <dbReference type="ChEBI" id="CHEBI:30616"/>
        <dbReference type="ChEBI" id="CHEBI:32551"/>
        <dbReference type="ChEBI" id="CHEBI:33019"/>
        <dbReference type="ChEBI" id="CHEBI:82748"/>
        <dbReference type="ChEBI" id="CHEBI:83665"/>
        <dbReference type="ChEBI" id="CHEBI:456215"/>
        <dbReference type="EC" id="6.3.4.19"/>
    </reaction>
</comment>
<comment type="subcellular location">
    <subcellularLocation>
        <location evidence="1">Cytoplasm</location>
    </subcellularLocation>
</comment>
<comment type="domain">
    <text>The N-terminal region contains the highly conserved SGGXDS motif, predicted to be a P-loop motif involved in ATP binding.</text>
</comment>
<comment type="similarity">
    <text evidence="1">Belongs to the tRNA(Ile)-lysidine synthase family.</text>
</comment>
<keyword id="KW-0067">ATP-binding</keyword>
<keyword id="KW-0963">Cytoplasm</keyword>
<keyword id="KW-0436">Ligase</keyword>
<keyword id="KW-0547">Nucleotide-binding</keyword>
<keyword id="KW-0819">tRNA processing</keyword>
<reference key="1">
    <citation type="journal article" date="2008" name="PLoS ONE">
        <title>Genome biology of Actinobacillus pleuropneumoniae JL03, an isolate of serotype 3 prevalent in China.</title>
        <authorList>
            <person name="Xu Z."/>
            <person name="Zhou Y."/>
            <person name="Li L."/>
            <person name="Zhou R."/>
            <person name="Xiao S."/>
            <person name="Wan Y."/>
            <person name="Zhang S."/>
            <person name="Wang K."/>
            <person name="Li W."/>
            <person name="Li L."/>
            <person name="Jin H."/>
            <person name="Kang M."/>
            <person name="Dalai B."/>
            <person name="Li T."/>
            <person name="Liu L."/>
            <person name="Cheng Y."/>
            <person name="Zhang L."/>
            <person name="Xu T."/>
            <person name="Zheng H."/>
            <person name="Pu S."/>
            <person name="Wang B."/>
            <person name="Gu W."/>
            <person name="Zhang X.L."/>
            <person name="Zhu G.-F."/>
            <person name="Wang S."/>
            <person name="Zhao G.-P."/>
            <person name="Chen H."/>
        </authorList>
    </citation>
    <scope>NUCLEOTIDE SEQUENCE [LARGE SCALE GENOMIC DNA]</scope>
    <source>
        <strain>JL03</strain>
    </source>
</reference>
<accession>B0BRD5</accession>
<protein>
    <recommendedName>
        <fullName evidence="1">tRNA(Ile)-lysidine synthase</fullName>
        <ecNumber evidence="1">6.3.4.19</ecNumber>
    </recommendedName>
    <alternativeName>
        <fullName evidence="1">tRNA(Ile)-2-lysyl-cytidine synthase</fullName>
    </alternativeName>
    <alternativeName>
        <fullName evidence="1">tRNA(Ile)-lysidine synthetase</fullName>
    </alternativeName>
</protein>
<dbReference type="EC" id="6.3.4.19" evidence="1"/>
<dbReference type="EMBL" id="CP000687">
    <property type="protein sequence ID" value="ABY70120.1"/>
    <property type="molecule type" value="Genomic_DNA"/>
</dbReference>
<dbReference type="RefSeq" id="WP_005618010.1">
    <property type="nucleotide sequence ID" value="NC_010278.1"/>
</dbReference>
<dbReference type="SMR" id="B0BRD5"/>
<dbReference type="KEGG" id="apj:APJL_1568"/>
<dbReference type="HOGENOM" id="CLU_018869_2_0_6"/>
<dbReference type="Proteomes" id="UP000008547">
    <property type="component" value="Chromosome"/>
</dbReference>
<dbReference type="GO" id="GO:0005737">
    <property type="term" value="C:cytoplasm"/>
    <property type="evidence" value="ECO:0007669"/>
    <property type="project" value="UniProtKB-SubCell"/>
</dbReference>
<dbReference type="GO" id="GO:0005524">
    <property type="term" value="F:ATP binding"/>
    <property type="evidence" value="ECO:0007669"/>
    <property type="project" value="UniProtKB-UniRule"/>
</dbReference>
<dbReference type="GO" id="GO:0032267">
    <property type="term" value="F:tRNA(Ile)-lysidine synthase activity"/>
    <property type="evidence" value="ECO:0007669"/>
    <property type="project" value="UniProtKB-EC"/>
</dbReference>
<dbReference type="GO" id="GO:0006400">
    <property type="term" value="P:tRNA modification"/>
    <property type="evidence" value="ECO:0007669"/>
    <property type="project" value="UniProtKB-UniRule"/>
</dbReference>
<dbReference type="CDD" id="cd01992">
    <property type="entry name" value="TilS_N"/>
    <property type="match status" value="1"/>
</dbReference>
<dbReference type="Gene3D" id="1.20.59.20">
    <property type="match status" value="1"/>
</dbReference>
<dbReference type="Gene3D" id="3.40.50.620">
    <property type="entry name" value="HUPs"/>
    <property type="match status" value="1"/>
</dbReference>
<dbReference type="HAMAP" id="MF_01161">
    <property type="entry name" value="tRNA_Ile_lys_synt"/>
    <property type="match status" value="1"/>
</dbReference>
<dbReference type="InterPro" id="IPR012796">
    <property type="entry name" value="Lysidine-tRNA-synth_C"/>
</dbReference>
<dbReference type="InterPro" id="IPR014729">
    <property type="entry name" value="Rossmann-like_a/b/a_fold"/>
</dbReference>
<dbReference type="InterPro" id="IPR011063">
    <property type="entry name" value="TilS/TtcA_N"/>
</dbReference>
<dbReference type="InterPro" id="IPR012094">
    <property type="entry name" value="tRNA_Ile_lys_synt"/>
</dbReference>
<dbReference type="InterPro" id="IPR012795">
    <property type="entry name" value="tRNA_Ile_lys_synt_N"/>
</dbReference>
<dbReference type="InterPro" id="IPR015262">
    <property type="entry name" value="tRNA_Ile_lys_synt_subst-bd"/>
</dbReference>
<dbReference type="NCBIfam" id="TIGR02433">
    <property type="entry name" value="lysidine_TilS_C"/>
    <property type="match status" value="1"/>
</dbReference>
<dbReference type="NCBIfam" id="TIGR02432">
    <property type="entry name" value="lysidine_TilS_N"/>
    <property type="match status" value="1"/>
</dbReference>
<dbReference type="PANTHER" id="PTHR43033">
    <property type="entry name" value="TRNA(ILE)-LYSIDINE SYNTHASE-RELATED"/>
    <property type="match status" value="1"/>
</dbReference>
<dbReference type="PANTHER" id="PTHR43033:SF1">
    <property type="entry name" value="TRNA(ILE)-LYSIDINE SYNTHASE-RELATED"/>
    <property type="match status" value="1"/>
</dbReference>
<dbReference type="Pfam" id="PF01171">
    <property type="entry name" value="ATP_bind_3"/>
    <property type="match status" value="1"/>
</dbReference>
<dbReference type="Pfam" id="PF09179">
    <property type="entry name" value="TilS"/>
    <property type="match status" value="1"/>
</dbReference>
<dbReference type="Pfam" id="PF11734">
    <property type="entry name" value="TilS_C"/>
    <property type="match status" value="1"/>
</dbReference>
<dbReference type="SUPFAM" id="SSF52402">
    <property type="entry name" value="Adenine nucleotide alpha hydrolases-like"/>
    <property type="match status" value="1"/>
</dbReference>
<dbReference type="SUPFAM" id="SSF82829">
    <property type="entry name" value="MesJ substrate recognition domain-like"/>
    <property type="match status" value="1"/>
</dbReference>
<dbReference type="SUPFAM" id="SSF56037">
    <property type="entry name" value="PheT/TilS domain"/>
    <property type="match status" value="1"/>
</dbReference>
<name>TILS_ACTPJ</name>
<feature type="chain" id="PRO_1000137861" description="tRNA(Ile)-lysidine synthase">
    <location>
        <begin position="1"/>
        <end position="419"/>
    </location>
</feature>
<feature type="binding site" evidence="1">
    <location>
        <begin position="25"/>
        <end position="30"/>
    </location>
    <ligand>
        <name>ATP</name>
        <dbReference type="ChEBI" id="CHEBI:30616"/>
    </ligand>
</feature>
<sequence>MLLDTLQTQFRHYFPTQRNFVLGLSGGIDSIVLLHLLAELQLNLRAVHIHHGLSPNADNWAAFCEQVCKRLKIPFILQKVTVDRSEGIEAGARAARYQAIGEIIQPNEVLVTAHHLDDQTETFLLALKRGSGIKGLSAMQAVGFWQNFTIFRPLLNVSKAQIEQYALQQQFTWIEDESNHDSHYDRNFLRNEVLPIVNQRWQHFSQMVARSAQHCAEQQMLLEELLAQELQRYADFSEKRLNIEAFPQFSLAKQQQLIRLWLEKCGAQMPSTAQLMQIIQQTIYADVDKNPQLKLADFWLRRYQHHLYLTGELLEPDDFCQPLFAQQSLTLPDGIGELQHLGDSIIYQKSGKIDRLLLPKVLVNAPLQVKLTHQGKVKQYAKPMREEMKKRYQQAQVPVWLRKRTPLIFFHDQLVFICH</sequence>